<proteinExistence type="inferred from homology"/>
<evidence type="ECO:0000250" key="1"/>
<evidence type="ECO:0000255" key="2"/>
<evidence type="ECO:0000255" key="3">
    <source>
        <dbReference type="PROSITE-ProRule" id="PRU01379"/>
    </source>
</evidence>
<evidence type="ECO:0000256" key="4">
    <source>
        <dbReference type="SAM" id="MobiDB-lite"/>
    </source>
</evidence>
<evidence type="ECO:0000305" key="5"/>
<reference key="1">
    <citation type="submission" date="2008-10" db="EMBL/GenBank/DDBJ databases">
        <title>Comparing putative pathogenicity factors between Trichophyton tonsurans and Trichophyton equinum.</title>
        <authorList>
            <person name="Preuett B.L."/>
            <person name="Abdel-Rahman S.M."/>
        </authorList>
    </citation>
    <scope>NUCLEOTIDE SEQUENCE [GENOMIC DNA]</scope>
</reference>
<name>MCPB_TRIEQ</name>
<accession>B8XGR2</accession>
<comment type="function">
    <text evidence="1">Extracellular metalloprotease that contributes to pathogenicity.</text>
</comment>
<comment type="cofactor">
    <cofactor evidence="3">
        <name>Zn(2+)</name>
        <dbReference type="ChEBI" id="CHEBI:29105"/>
    </cofactor>
</comment>
<comment type="subcellular location">
    <subcellularLocation>
        <location evidence="1">Secreted</location>
    </subcellularLocation>
</comment>
<comment type="similarity">
    <text evidence="5">Belongs to the peptidase M14 family.</text>
</comment>
<keyword id="KW-0121">Carboxypeptidase</keyword>
<keyword id="KW-0325">Glycoprotein</keyword>
<keyword id="KW-0378">Hydrolase</keyword>
<keyword id="KW-0645">Protease</keyword>
<keyword id="KW-0964">Secreted</keyword>
<keyword id="KW-0732">Signal</keyword>
<keyword id="KW-0843">Virulence</keyword>
<gene>
    <name type="primary">MCPB</name>
    <name type="synonym">CARB2</name>
</gene>
<sequence>MVAYRFLTLISLGLGSHCASALQYGYNQVSTHKDSAVVAGAFPAINGTHLQSPAFTSPGTVPRGFSDGTSGPTRDETMEGFMRRLARSNSWMTYHKANFKSEEGRKFPYMYLSASKSSIEKPSSHKLRVWLQGGVHGNEPAGDQSMLALLGDLAANQKWAAKLLEKMDILVLPRYNPDGVFYFQRYLATNFDPNRDHIKLARQQTRDIKELFARFSPHIATDMHEFTAGRAFGPKKDIIYAADALFSSAKNLNIDEGIRQLSEKLFAKRMGKDIEAAGLRWDPYITQGESSSSKLLLREAGTDAKIGRNAMGLSQCVVFLCETRGIGIADQHFERRTLSGLVMVKSILQTAVDNFDEVYNTIERGIRRFTNSRNDIVLTDRSPIMERTFGMLNTTDATLFDYPIDFATTTPAQAVLTRSRPRAYLIPPSWPDIVKRLEVFGVKADKLPYSYVGPVEALNVTSVTFDKEYYEGVVTTTVETKLVERNIRLPAGSYLVKTNQKNAALAFVALEPENIDSFASFGVIPVSTGDQYPIFRLK</sequence>
<dbReference type="EC" id="3.4.17.-"/>
<dbReference type="EMBL" id="FJ348244">
    <property type="protein sequence ID" value="ACL37334.1"/>
    <property type="molecule type" value="Genomic_DNA"/>
</dbReference>
<dbReference type="GlyCosmos" id="B8XGR2">
    <property type="glycosylation" value="3 sites, No reported glycans"/>
</dbReference>
<dbReference type="VEuPathDB" id="FungiDB:TEQG_07142"/>
<dbReference type="GO" id="GO:0005576">
    <property type="term" value="C:extracellular region"/>
    <property type="evidence" value="ECO:0007669"/>
    <property type="project" value="UniProtKB-SubCell"/>
</dbReference>
<dbReference type="GO" id="GO:0004181">
    <property type="term" value="F:metallocarboxypeptidase activity"/>
    <property type="evidence" value="ECO:0007669"/>
    <property type="project" value="InterPro"/>
</dbReference>
<dbReference type="GO" id="GO:0008270">
    <property type="term" value="F:zinc ion binding"/>
    <property type="evidence" value="ECO:0007669"/>
    <property type="project" value="InterPro"/>
</dbReference>
<dbReference type="GO" id="GO:0006508">
    <property type="term" value="P:proteolysis"/>
    <property type="evidence" value="ECO:0007669"/>
    <property type="project" value="UniProtKB-KW"/>
</dbReference>
<dbReference type="CDD" id="cd06242">
    <property type="entry name" value="M14-like"/>
    <property type="match status" value="1"/>
</dbReference>
<dbReference type="Gene3D" id="3.40.630.10">
    <property type="entry name" value="Zn peptidases"/>
    <property type="match status" value="1"/>
</dbReference>
<dbReference type="InterPro" id="IPR000834">
    <property type="entry name" value="Peptidase_M14"/>
</dbReference>
<dbReference type="PANTHER" id="PTHR11705:SF83">
    <property type="entry name" value="INACTIVE METALLOCARBOXYPEPTIDASE ECM14"/>
    <property type="match status" value="1"/>
</dbReference>
<dbReference type="PANTHER" id="PTHR11705">
    <property type="entry name" value="PROTEASE FAMILY M14 CARBOXYPEPTIDASE A,B"/>
    <property type="match status" value="1"/>
</dbReference>
<dbReference type="Pfam" id="PF00246">
    <property type="entry name" value="Peptidase_M14"/>
    <property type="match status" value="1"/>
</dbReference>
<dbReference type="SUPFAM" id="SSF53187">
    <property type="entry name" value="Zn-dependent exopeptidases"/>
    <property type="match status" value="1"/>
</dbReference>
<dbReference type="PROSITE" id="PS52035">
    <property type="entry name" value="PEPTIDASE_M14"/>
    <property type="match status" value="1"/>
</dbReference>
<organism>
    <name type="scientific">Trichophyton equinum</name>
    <name type="common">Horse ringworm fungus</name>
    <dbReference type="NCBI Taxonomy" id="63418"/>
    <lineage>
        <taxon>Eukaryota</taxon>
        <taxon>Fungi</taxon>
        <taxon>Dikarya</taxon>
        <taxon>Ascomycota</taxon>
        <taxon>Pezizomycotina</taxon>
        <taxon>Eurotiomycetes</taxon>
        <taxon>Eurotiomycetidae</taxon>
        <taxon>Onygenales</taxon>
        <taxon>Arthrodermataceae</taxon>
        <taxon>Trichophyton</taxon>
    </lineage>
</organism>
<protein>
    <recommendedName>
        <fullName>Carboxypeptidase 2</fullName>
        <ecNumber>3.4.17.-</ecNumber>
    </recommendedName>
    <alternativeName>
        <fullName>Carboxypeptidase M14B</fullName>
    </alternativeName>
    <alternativeName>
        <fullName>Carboxypeptidase MCPB</fullName>
    </alternativeName>
</protein>
<feature type="signal peptide" evidence="2">
    <location>
        <begin position="1"/>
        <end position="21"/>
    </location>
</feature>
<feature type="chain" id="PRO_0000384110" description="Carboxypeptidase 2">
    <location>
        <begin position="22"/>
        <end position="538"/>
    </location>
</feature>
<feature type="domain" description="Peptidase M14" evidence="3">
    <location>
        <begin position="71"/>
        <end position="351"/>
    </location>
</feature>
<feature type="region of interest" description="Disordered" evidence="4">
    <location>
        <begin position="53"/>
        <end position="76"/>
    </location>
</feature>
<feature type="active site" description="Proton donor/acceptor" evidence="3">
    <location>
        <position position="322"/>
    </location>
</feature>
<feature type="binding site" evidence="3">
    <location>
        <position position="136"/>
    </location>
    <ligand>
        <name>Zn(2+)</name>
        <dbReference type="ChEBI" id="CHEBI:29105"/>
        <note>catalytic</note>
    </ligand>
</feature>
<feature type="binding site" evidence="3">
    <location>
        <position position="139"/>
    </location>
    <ligand>
        <name>Zn(2+)</name>
        <dbReference type="ChEBI" id="CHEBI:29105"/>
        <note>catalytic</note>
    </ligand>
</feature>
<feature type="binding site" evidence="3">
    <location>
        <position position="224"/>
    </location>
    <ligand>
        <name>Zn(2+)</name>
        <dbReference type="ChEBI" id="CHEBI:29105"/>
        <note>catalytic</note>
    </ligand>
</feature>
<feature type="glycosylation site" description="N-linked (GlcNAc...) asparagine" evidence="2">
    <location>
        <position position="46"/>
    </location>
</feature>
<feature type="glycosylation site" description="N-linked (GlcNAc...) asparagine" evidence="2">
    <location>
        <position position="393"/>
    </location>
</feature>
<feature type="glycosylation site" description="N-linked (GlcNAc...) asparagine" evidence="2">
    <location>
        <position position="459"/>
    </location>
</feature>